<comment type="function">
    <text evidence="2 4">Polynucleotide kinase that can phosphorylate the 5'-hydroxyl groups of single-stranded and double-stranded RNA and DNA substrates (By similarity). Required for the efficient pre-rRNA processing of internal transcribed spacer 2 (ITS2) (PubMed:26624285). Essential for definitive hematopoiesis and pancreas morphogenesis (PubMed:26624285).</text>
</comment>
<comment type="catalytic activity">
    <reaction evidence="2">
        <text>a 5'-end dephospho-2'-deoxyribonucleoside-DNA + ATP = a 5'-end 5'-phospho-2'-deoxyribonucleoside-DNA + ADP + H(+)</text>
        <dbReference type="Rhea" id="RHEA:15669"/>
        <dbReference type="Rhea" id="RHEA-COMP:13180"/>
        <dbReference type="Rhea" id="RHEA-COMP:13184"/>
        <dbReference type="ChEBI" id="CHEBI:15378"/>
        <dbReference type="ChEBI" id="CHEBI:30616"/>
        <dbReference type="ChEBI" id="CHEBI:136412"/>
        <dbReference type="ChEBI" id="CHEBI:136416"/>
        <dbReference type="ChEBI" id="CHEBI:456216"/>
        <dbReference type="EC" id="2.7.1.78"/>
    </reaction>
</comment>
<comment type="catalytic activity">
    <reaction evidence="2">
        <text>a 5'-end dephospho-ribonucleoside-RNA + ATP = a 5'-end 5'-phospho-ribonucleoside-RNA + ADP + H(+)</text>
        <dbReference type="Rhea" id="RHEA:54580"/>
        <dbReference type="Rhea" id="RHEA-COMP:13936"/>
        <dbReference type="Rhea" id="RHEA-COMP:15179"/>
        <dbReference type="ChEBI" id="CHEBI:15378"/>
        <dbReference type="ChEBI" id="CHEBI:30616"/>
        <dbReference type="ChEBI" id="CHEBI:138282"/>
        <dbReference type="ChEBI" id="CHEBI:138284"/>
        <dbReference type="ChEBI" id="CHEBI:456216"/>
        <dbReference type="EC" id="2.7.1.78"/>
    </reaction>
</comment>
<comment type="subcellular location">
    <subcellularLocation>
        <location evidence="1">Nucleus</location>
    </subcellularLocation>
    <subcellularLocation>
        <location evidence="2">Nucleus</location>
        <location evidence="2">Nucleolus</location>
    </subcellularLocation>
    <text evidence="2">Colocalizes with pre-60S rRNP particles.</text>
</comment>
<comment type="disruption phenotype">
    <text evidence="4">Morpholino knockdown results in hypoplasia of the pancreas, liver, and intestine and defective hematopoiesis (PubMed:26624285). Defective pre-rRNA processing within ITS2, resulting in the accumulation of ITS2 containing rRNA precursors (PubMed:26624285).</text>
</comment>
<comment type="similarity">
    <text evidence="5">Belongs to the Clp1 family. NOL9/GRC3 subfamily.</text>
</comment>
<gene>
    <name type="primary">nol9</name>
</gene>
<dbReference type="EC" id="2.7.1.78" evidence="2"/>
<dbReference type="EMBL" id="CR376748">
    <property type="status" value="NOT_ANNOTATED_CDS"/>
    <property type="molecule type" value="Genomic_DNA"/>
</dbReference>
<dbReference type="RefSeq" id="XP_005162271.1">
    <property type="nucleotide sequence ID" value="XM_005162214.3"/>
</dbReference>
<dbReference type="RefSeq" id="XP_696106.3">
    <property type="nucleotide sequence ID" value="XM_691014.7"/>
</dbReference>
<dbReference type="SMR" id="E7F654"/>
<dbReference type="FunCoup" id="E7F654">
    <property type="interactions" value="1588"/>
</dbReference>
<dbReference type="STRING" id="7955.ENSDARP00000145169"/>
<dbReference type="PaxDb" id="7955-ENSDARP00000123267"/>
<dbReference type="PeptideAtlas" id="E7F654"/>
<dbReference type="Ensembl" id="ENSDART00000142124">
    <property type="protein sequence ID" value="ENSDARP00000123267"/>
    <property type="gene ID" value="ENSDARG00000077751"/>
</dbReference>
<dbReference type="Ensembl" id="ENSDART00000181069">
    <property type="protein sequence ID" value="ENSDARP00000145169"/>
    <property type="gene ID" value="ENSDARG00000077751"/>
</dbReference>
<dbReference type="GeneID" id="567715"/>
<dbReference type="KEGG" id="dre:567715"/>
<dbReference type="AGR" id="ZFIN:ZDB-GENE-070629-1"/>
<dbReference type="CTD" id="79707"/>
<dbReference type="ZFIN" id="ZDB-GENE-070629-1">
    <property type="gene designation" value="nol9"/>
</dbReference>
<dbReference type="eggNOG" id="KOG2750">
    <property type="taxonomic scope" value="Eukaryota"/>
</dbReference>
<dbReference type="HOGENOM" id="CLU_021128_2_0_1"/>
<dbReference type="OMA" id="YFGETSC"/>
<dbReference type="OrthoDB" id="2405412at2759"/>
<dbReference type="TreeFam" id="TF313802"/>
<dbReference type="PRO" id="PR:E7F654"/>
<dbReference type="Proteomes" id="UP000000437">
    <property type="component" value="Chromosome 23"/>
</dbReference>
<dbReference type="Bgee" id="ENSDARG00000077751">
    <property type="expression patterns" value="Expressed in gastrula and 29 other cell types or tissues"/>
</dbReference>
<dbReference type="ExpressionAtlas" id="E7F654">
    <property type="expression patterns" value="baseline and differential"/>
</dbReference>
<dbReference type="GO" id="GO:0005730">
    <property type="term" value="C:nucleolus"/>
    <property type="evidence" value="ECO:0000250"/>
    <property type="project" value="UniProtKB"/>
</dbReference>
<dbReference type="GO" id="GO:0005634">
    <property type="term" value="C:nucleus"/>
    <property type="evidence" value="ECO:0000318"/>
    <property type="project" value="GO_Central"/>
</dbReference>
<dbReference type="GO" id="GO:0005524">
    <property type="term" value="F:ATP binding"/>
    <property type="evidence" value="ECO:0007669"/>
    <property type="project" value="UniProtKB-KW"/>
</dbReference>
<dbReference type="GO" id="GO:0051731">
    <property type="term" value="F:polynucleotide 5'-hydroxyl-kinase activity"/>
    <property type="evidence" value="ECO:0000318"/>
    <property type="project" value="GO_Central"/>
</dbReference>
<dbReference type="GO" id="GO:0003723">
    <property type="term" value="F:RNA binding"/>
    <property type="evidence" value="ECO:0007669"/>
    <property type="project" value="UniProtKB-KW"/>
</dbReference>
<dbReference type="GO" id="GO:0000448">
    <property type="term" value="P:cleavage in ITS2 between 5.8S rRNA and LSU-rRNA of tricistronic rRNA transcript (SSU-rRNA, 5.8S rRNA, LSU-rRNA)"/>
    <property type="evidence" value="ECO:0000315"/>
    <property type="project" value="ZFIN"/>
</dbReference>
<dbReference type="GO" id="GO:0060216">
    <property type="term" value="P:definitive hemopoiesis"/>
    <property type="evidence" value="ECO:0000315"/>
    <property type="project" value="ZFIN"/>
</dbReference>
<dbReference type="GO" id="GO:0048565">
    <property type="term" value="P:digestive tract development"/>
    <property type="evidence" value="ECO:0000315"/>
    <property type="project" value="ZFIN"/>
</dbReference>
<dbReference type="GO" id="GO:0031017">
    <property type="term" value="P:exocrine pancreas development"/>
    <property type="evidence" value="ECO:0000315"/>
    <property type="project" value="ZFIN"/>
</dbReference>
<dbReference type="GO" id="GO:0001889">
    <property type="term" value="P:liver development"/>
    <property type="evidence" value="ECO:0000315"/>
    <property type="project" value="ZFIN"/>
</dbReference>
<dbReference type="GO" id="GO:0061113">
    <property type="term" value="P:pancreas morphogenesis"/>
    <property type="evidence" value="ECO:0000315"/>
    <property type="project" value="UniProtKB"/>
</dbReference>
<dbReference type="GO" id="GO:0006364">
    <property type="term" value="P:rRNA processing"/>
    <property type="evidence" value="ECO:0000315"/>
    <property type="project" value="ZFIN"/>
</dbReference>
<dbReference type="FunFam" id="3.40.50.300:FF:003212">
    <property type="entry name" value="Putative cleavage/polyadenylation factor ia subunit clp1p"/>
    <property type="match status" value="1"/>
</dbReference>
<dbReference type="Gene3D" id="3.40.50.300">
    <property type="entry name" value="P-loop containing nucleotide triphosphate hydrolases"/>
    <property type="match status" value="1"/>
</dbReference>
<dbReference type="InterPro" id="IPR045116">
    <property type="entry name" value="Clp1/Grc3"/>
</dbReference>
<dbReference type="InterPro" id="IPR032319">
    <property type="entry name" value="CLP1_P"/>
</dbReference>
<dbReference type="InterPro" id="IPR027417">
    <property type="entry name" value="P-loop_NTPase"/>
</dbReference>
<dbReference type="PANTHER" id="PTHR12755">
    <property type="entry name" value="CLEAVAGE/POLYADENYLATION FACTOR IA SUBUNIT CLP1P"/>
    <property type="match status" value="1"/>
</dbReference>
<dbReference type="PANTHER" id="PTHR12755:SF3">
    <property type="entry name" value="POLYNUCLEOTIDE 5'-HYDROXYL-KINASE NOL9"/>
    <property type="match status" value="1"/>
</dbReference>
<dbReference type="Pfam" id="PF16575">
    <property type="entry name" value="CLP1_P"/>
    <property type="match status" value="1"/>
</dbReference>
<dbReference type="Pfam" id="PF24419">
    <property type="entry name" value="Cupin_NOL9"/>
    <property type="match status" value="1"/>
</dbReference>
<dbReference type="Pfam" id="PF25467">
    <property type="entry name" value="NOL9_C"/>
    <property type="match status" value="1"/>
</dbReference>
<dbReference type="SUPFAM" id="SSF52540">
    <property type="entry name" value="P-loop containing nucleoside triphosphate hydrolases"/>
    <property type="match status" value="1"/>
</dbReference>
<accession>E7F654</accession>
<accession>A0A8N7TDU4</accession>
<proteinExistence type="inferred from homology"/>
<name>NOL9_DANRE</name>
<reference key="1">
    <citation type="journal article" date="2013" name="Nature">
        <title>The zebrafish reference genome sequence and its relationship to the human genome.</title>
        <authorList>
            <person name="Howe K."/>
            <person name="Clark M.D."/>
            <person name="Torroja C.F."/>
            <person name="Torrance J."/>
            <person name="Berthelot C."/>
            <person name="Muffato M."/>
            <person name="Collins J.E."/>
            <person name="Humphray S."/>
            <person name="McLaren K."/>
            <person name="Matthews L."/>
            <person name="McLaren S."/>
            <person name="Sealy I."/>
            <person name="Caccamo M."/>
            <person name="Churcher C."/>
            <person name="Scott C."/>
            <person name="Barrett J.C."/>
            <person name="Koch R."/>
            <person name="Rauch G.J."/>
            <person name="White S."/>
            <person name="Chow W."/>
            <person name="Kilian B."/>
            <person name="Quintais L.T."/>
            <person name="Guerra-Assuncao J.A."/>
            <person name="Zhou Y."/>
            <person name="Gu Y."/>
            <person name="Yen J."/>
            <person name="Vogel J.H."/>
            <person name="Eyre T."/>
            <person name="Redmond S."/>
            <person name="Banerjee R."/>
            <person name="Chi J."/>
            <person name="Fu B."/>
            <person name="Langley E."/>
            <person name="Maguire S.F."/>
            <person name="Laird G.K."/>
            <person name="Lloyd D."/>
            <person name="Kenyon E."/>
            <person name="Donaldson S."/>
            <person name="Sehra H."/>
            <person name="Almeida-King J."/>
            <person name="Loveland J."/>
            <person name="Trevanion S."/>
            <person name="Jones M."/>
            <person name="Quail M."/>
            <person name="Willey D."/>
            <person name="Hunt A."/>
            <person name="Burton J."/>
            <person name="Sims S."/>
            <person name="McLay K."/>
            <person name="Plumb B."/>
            <person name="Davis J."/>
            <person name="Clee C."/>
            <person name="Oliver K."/>
            <person name="Clark R."/>
            <person name="Riddle C."/>
            <person name="Elliot D."/>
            <person name="Threadgold G."/>
            <person name="Harden G."/>
            <person name="Ware D."/>
            <person name="Begum S."/>
            <person name="Mortimore B."/>
            <person name="Kerry G."/>
            <person name="Heath P."/>
            <person name="Phillimore B."/>
            <person name="Tracey A."/>
            <person name="Corby N."/>
            <person name="Dunn M."/>
            <person name="Johnson C."/>
            <person name="Wood J."/>
            <person name="Clark S."/>
            <person name="Pelan S."/>
            <person name="Griffiths G."/>
            <person name="Smith M."/>
            <person name="Glithero R."/>
            <person name="Howden P."/>
            <person name="Barker N."/>
            <person name="Lloyd C."/>
            <person name="Stevens C."/>
            <person name="Harley J."/>
            <person name="Holt K."/>
            <person name="Panagiotidis G."/>
            <person name="Lovell J."/>
            <person name="Beasley H."/>
            <person name="Henderson C."/>
            <person name="Gordon D."/>
            <person name="Auger K."/>
            <person name="Wright D."/>
            <person name="Collins J."/>
            <person name="Raisen C."/>
            <person name="Dyer L."/>
            <person name="Leung K."/>
            <person name="Robertson L."/>
            <person name="Ambridge K."/>
            <person name="Leongamornlert D."/>
            <person name="McGuire S."/>
            <person name="Gilderthorp R."/>
            <person name="Griffiths C."/>
            <person name="Manthravadi D."/>
            <person name="Nichol S."/>
            <person name="Barker G."/>
            <person name="Whitehead S."/>
            <person name="Kay M."/>
            <person name="Brown J."/>
            <person name="Murnane C."/>
            <person name="Gray E."/>
            <person name="Humphries M."/>
            <person name="Sycamore N."/>
            <person name="Barker D."/>
            <person name="Saunders D."/>
            <person name="Wallis J."/>
            <person name="Babbage A."/>
            <person name="Hammond S."/>
            <person name="Mashreghi-Mohammadi M."/>
            <person name="Barr L."/>
            <person name="Martin S."/>
            <person name="Wray P."/>
            <person name="Ellington A."/>
            <person name="Matthews N."/>
            <person name="Ellwood M."/>
            <person name="Woodmansey R."/>
            <person name="Clark G."/>
            <person name="Cooper J."/>
            <person name="Tromans A."/>
            <person name="Grafham D."/>
            <person name="Skuce C."/>
            <person name="Pandian R."/>
            <person name="Andrews R."/>
            <person name="Harrison E."/>
            <person name="Kimberley A."/>
            <person name="Garnett J."/>
            <person name="Fosker N."/>
            <person name="Hall R."/>
            <person name="Garner P."/>
            <person name="Kelly D."/>
            <person name="Bird C."/>
            <person name="Palmer S."/>
            <person name="Gehring I."/>
            <person name="Berger A."/>
            <person name="Dooley C.M."/>
            <person name="Ersan-Urun Z."/>
            <person name="Eser C."/>
            <person name="Geiger H."/>
            <person name="Geisler M."/>
            <person name="Karotki L."/>
            <person name="Kirn A."/>
            <person name="Konantz J."/>
            <person name="Konantz M."/>
            <person name="Oberlander M."/>
            <person name="Rudolph-Geiger S."/>
            <person name="Teucke M."/>
            <person name="Lanz C."/>
            <person name="Raddatz G."/>
            <person name="Osoegawa K."/>
            <person name="Zhu B."/>
            <person name="Rapp A."/>
            <person name="Widaa S."/>
            <person name="Langford C."/>
            <person name="Yang F."/>
            <person name="Schuster S.C."/>
            <person name="Carter N.P."/>
            <person name="Harrow J."/>
            <person name="Ning Z."/>
            <person name="Herrero J."/>
            <person name="Searle S.M."/>
            <person name="Enright A."/>
            <person name="Geisler R."/>
            <person name="Plasterk R.H."/>
            <person name="Lee C."/>
            <person name="Westerfield M."/>
            <person name="de Jong P.J."/>
            <person name="Zon L.I."/>
            <person name="Postlethwait J.H."/>
            <person name="Nusslein-Volhard C."/>
            <person name="Hubbard T.J."/>
            <person name="Roest Crollius H."/>
            <person name="Rogers J."/>
            <person name="Stemple D.L."/>
        </authorList>
    </citation>
    <scope>NUCLEOTIDE SEQUENCE [LARGE SCALE GENOMIC DNA]</scope>
    <source>
        <strain>Tuebingen</strain>
    </source>
</reference>
<reference key="2">
    <citation type="journal article" date="2015" name="PLoS Genet.">
        <title>The Ribosome Biogenesis Protein Nol9 Is Essential for Definitive Hematopoiesis and Pancreas Morphogenesis in Zebrafish.</title>
        <authorList>
            <person name="Bielczyk-Maczynska E."/>
            <person name="Lam Hung L."/>
            <person name="Ferreira L."/>
            <person name="Fleischmann T."/>
            <person name="Weis F."/>
            <person name="Fernandez-Pevida A."/>
            <person name="Harvey S.A."/>
            <person name="Wali N."/>
            <person name="Warren A.J."/>
            <person name="Barroso I."/>
            <person name="Stemple D.L."/>
            <person name="Cvejic A."/>
        </authorList>
    </citation>
    <scope>FUNCTION</scope>
    <scope>DISRUPTION PHENOTYPE</scope>
</reference>
<protein>
    <recommendedName>
        <fullName>Polynucleotide 5'-hydroxyl-kinase NOL9</fullName>
        <ecNumber evidence="2">2.7.1.78</ecNumber>
    </recommendedName>
    <alternativeName>
        <fullName>Nucleolar protein 9</fullName>
    </alternativeName>
</protein>
<feature type="chain" id="PRO_0000459115" description="Polynucleotide 5'-hydroxyl-kinase NOL9">
    <location>
        <begin position="1"/>
        <end position="713"/>
    </location>
</feature>
<feature type="region of interest" description="Disordered" evidence="3">
    <location>
        <begin position="1"/>
        <end position="39"/>
    </location>
</feature>
<feature type="compositionally biased region" description="Basic residues" evidence="3">
    <location>
        <begin position="1"/>
        <end position="32"/>
    </location>
</feature>
<feature type="binding site" evidence="2">
    <location>
        <begin position="343"/>
        <end position="350"/>
    </location>
    <ligand>
        <name>ATP</name>
        <dbReference type="ChEBI" id="CHEBI:30616"/>
    </ligand>
</feature>
<keyword id="KW-0067">ATP-binding</keyword>
<keyword id="KW-0418">Kinase</keyword>
<keyword id="KW-0547">Nucleotide-binding</keyword>
<keyword id="KW-0539">Nucleus</keyword>
<keyword id="KW-0597">Phosphoprotein</keyword>
<keyword id="KW-1185">Reference proteome</keyword>
<keyword id="KW-0694">RNA-binding</keyword>
<keyword id="KW-0698">rRNA processing</keyword>
<keyword id="KW-0808">Transferase</keyword>
<evidence type="ECO:0000250" key="1">
    <source>
        <dbReference type="UniProtKB" id="Q3TZX8"/>
    </source>
</evidence>
<evidence type="ECO:0000250" key="2">
    <source>
        <dbReference type="UniProtKB" id="Q5SY16"/>
    </source>
</evidence>
<evidence type="ECO:0000256" key="3">
    <source>
        <dbReference type="SAM" id="MobiDB-lite"/>
    </source>
</evidence>
<evidence type="ECO:0000269" key="4">
    <source>
    </source>
</evidence>
<evidence type="ECO:0000305" key="5"/>
<sequence length="713" mass="78323">MTMKVHKVHSRSQQRQRNASKQHGKNKWNKKVRSLDSTLLNTSSGTAKLEQEIAKKEKPAIKRLKKLYAKPVTLLSDNNCADEDKVKPTSVTFAHVHTNGGTELDDSSRSVDSQEWSEYANSVLQNGMETSTLPDSDQAEDGLQFHAHLDHTKNRAVLVMKQSQVLCFRGKCLLTCLYGHVEVLGFTIEEGQQPYPVFSPPTHCPLTITALGNNQSSSKNKKEGQLEAKAIVRKYFTTEPSKKLMNEVDSDSCVVLLESLDTPLTRFLSSFSELTELFGLNSKELKSQAAIYSPVLSAVGVTALRGPCAQGLVMSRSYKETISSLLSAWAGEFDRCPIILVCGGKSSGKSTFNRHLINSLLNHTASVEYLECDLGQTEFTPPGCLSLCTVTEPLLGPPFTHLRDPEHMVYYGQADCQSDIDRYLESLKSLWRNVSGESPVIINTMGWIRGHGFQILVDLVRLFSVTHVVQLSYGTAPQCQLLTSEFIRSAHGWQTHPPTTPALTEDSHSPSRSHVFLSVQSEFEGAGVSGEMRFQRSNELRDLALLSYISKLQSSDPGPIRPLHCFIPYQVPHSSVAIGVTHCEVAPNNILYAANASVVGLCCLSEKVVGRGGPVILSQTPICQCVGLGVLRGVDMGRGLYFLVTPVSPSVLKHVNCLLLGEISLPKILLTQQHGVEGDLPYITTDYSFEVQGAGKLHIFKGLTRPGFIKSDN</sequence>
<organism>
    <name type="scientific">Danio rerio</name>
    <name type="common">Zebrafish</name>
    <name type="synonym">Brachydanio rerio</name>
    <dbReference type="NCBI Taxonomy" id="7955"/>
    <lineage>
        <taxon>Eukaryota</taxon>
        <taxon>Metazoa</taxon>
        <taxon>Chordata</taxon>
        <taxon>Craniata</taxon>
        <taxon>Vertebrata</taxon>
        <taxon>Euteleostomi</taxon>
        <taxon>Actinopterygii</taxon>
        <taxon>Neopterygii</taxon>
        <taxon>Teleostei</taxon>
        <taxon>Ostariophysi</taxon>
        <taxon>Cypriniformes</taxon>
        <taxon>Danionidae</taxon>
        <taxon>Danioninae</taxon>
        <taxon>Danio</taxon>
    </lineage>
</organism>